<comment type="function">
    <text evidence="1">Catalyzes the oxidation of 5,10-methylenetetrahydrofolate to 5,10-methenyltetrahydrofolate and then the hydrolysis of 5,10-methenyltetrahydrofolate to 10-formyltetrahydrofolate.</text>
</comment>
<comment type="catalytic activity">
    <reaction evidence="1">
        <text>(6R)-5,10-methylene-5,6,7,8-tetrahydrofolate + NADP(+) = (6R)-5,10-methenyltetrahydrofolate + NADPH</text>
        <dbReference type="Rhea" id="RHEA:22812"/>
        <dbReference type="ChEBI" id="CHEBI:15636"/>
        <dbReference type="ChEBI" id="CHEBI:57455"/>
        <dbReference type="ChEBI" id="CHEBI:57783"/>
        <dbReference type="ChEBI" id="CHEBI:58349"/>
        <dbReference type="EC" id="1.5.1.5"/>
    </reaction>
</comment>
<comment type="catalytic activity">
    <reaction evidence="1">
        <text>(6R)-5,10-methenyltetrahydrofolate + H2O = (6R)-10-formyltetrahydrofolate + H(+)</text>
        <dbReference type="Rhea" id="RHEA:23700"/>
        <dbReference type="ChEBI" id="CHEBI:15377"/>
        <dbReference type="ChEBI" id="CHEBI:15378"/>
        <dbReference type="ChEBI" id="CHEBI:57455"/>
        <dbReference type="ChEBI" id="CHEBI:195366"/>
        <dbReference type="EC" id="3.5.4.9"/>
    </reaction>
</comment>
<comment type="pathway">
    <text evidence="1">One-carbon metabolism; tetrahydrofolate interconversion.</text>
</comment>
<comment type="subunit">
    <text evidence="1">Homodimer.</text>
</comment>
<comment type="similarity">
    <text evidence="1">Belongs to the tetrahydrofolate dehydrogenase/cyclohydrolase family.</text>
</comment>
<protein>
    <recommendedName>
        <fullName evidence="1">Bifunctional protein FolD</fullName>
    </recommendedName>
    <domain>
        <recommendedName>
            <fullName evidence="1">Methylenetetrahydrofolate dehydrogenase</fullName>
            <ecNumber evidence="1">1.5.1.5</ecNumber>
        </recommendedName>
    </domain>
    <domain>
        <recommendedName>
            <fullName evidence="1">Methenyltetrahydrofolate cyclohydrolase</fullName>
            <ecNumber evidence="1">3.5.4.9</ecNumber>
        </recommendedName>
    </domain>
</protein>
<gene>
    <name evidence="1" type="primary">folD</name>
    <name type="ordered locus">Acid345_4424</name>
</gene>
<dbReference type="EC" id="1.5.1.5" evidence="1"/>
<dbReference type="EC" id="3.5.4.9" evidence="1"/>
<dbReference type="EMBL" id="CP000360">
    <property type="protein sequence ID" value="ABF43424.1"/>
    <property type="molecule type" value="Genomic_DNA"/>
</dbReference>
<dbReference type="RefSeq" id="WP_011525221.1">
    <property type="nucleotide sequence ID" value="NC_008009.1"/>
</dbReference>
<dbReference type="SMR" id="Q1II76"/>
<dbReference type="STRING" id="204669.Acid345_4424"/>
<dbReference type="EnsemblBacteria" id="ABF43424">
    <property type="protein sequence ID" value="ABF43424"/>
    <property type="gene ID" value="Acid345_4424"/>
</dbReference>
<dbReference type="KEGG" id="aba:Acid345_4424"/>
<dbReference type="eggNOG" id="COG0190">
    <property type="taxonomic scope" value="Bacteria"/>
</dbReference>
<dbReference type="HOGENOM" id="CLU_034045_2_1_0"/>
<dbReference type="OrthoDB" id="9803580at2"/>
<dbReference type="UniPathway" id="UPA00193"/>
<dbReference type="Proteomes" id="UP000002432">
    <property type="component" value="Chromosome"/>
</dbReference>
<dbReference type="GO" id="GO:0005829">
    <property type="term" value="C:cytosol"/>
    <property type="evidence" value="ECO:0007669"/>
    <property type="project" value="TreeGrafter"/>
</dbReference>
<dbReference type="GO" id="GO:0004477">
    <property type="term" value="F:methenyltetrahydrofolate cyclohydrolase activity"/>
    <property type="evidence" value="ECO:0007669"/>
    <property type="project" value="UniProtKB-UniRule"/>
</dbReference>
<dbReference type="GO" id="GO:0004488">
    <property type="term" value="F:methylenetetrahydrofolate dehydrogenase (NADP+) activity"/>
    <property type="evidence" value="ECO:0007669"/>
    <property type="project" value="UniProtKB-UniRule"/>
</dbReference>
<dbReference type="GO" id="GO:0000105">
    <property type="term" value="P:L-histidine biosynthetic process"/>
    <property type="evidence" value="ECO:0007669"/>
    <property type="project" value="UniProtKB-KW"/>
</dbReference>
<dbReference type="GO" id="GO:0009086">
    <property type="term" value="P:methionine biosynthetic process"/>
    <property type="evidence" value="ECO:0007669"/>
    <property type="project" value="UniProtKB-KW"/>
</dbReference>
<dbReference type="GO" id="GO:0006164">
    <property type="term" value="P:purine nucleotide biosynthetic process"/>
    <property type="evidence" value="ECO:0007669"/>
    <property type="project" value="UniProtKB-KW"/>
</dbReference>
<dbReference type="GO" id="GO:0035999">
    <property type="term" value="P:tetrahydrofolate interconversion"/>
    <property type="evidence" value="ECO:0007669"/>
    <property type="project" value="UniProtKB-UniRule"/>
</dbReference>
<dbReference type="CDD" id="cd01080">
    <property type="entry name" value="NAD_bind_m-THF_DH_Cyclohyd"/>
    <property type="match status" value="1"/>
</dbReference>
<dbReference type="FunFam" id="3.40.50.720:FF:000094">
    <property type="entry name" value="Bifunctional protein FolD"/>
    <property type="match status" value="1"/>
</dbReference>
<dbReference type="FunFam" id="3.40.50.10860:FF:000005">
    <property type="entry name" value="C-1-tetrahydrofolate synthase, cytoplasmic, putative"/>
    <property type="match status" value="1"/>
</dbReference>
<dbReference type="Gene3D" id="3.40.50.10860">
    <property type="entry name" value="Leucine Dehydrogenase, chain A, domain 1"/>
    <property type="match status" value="1"/>
</dbReference>
<dbReference type="Gene3D" id="3.40.50.720">
    <property type="entry name" value="NAD(P)-binding Rossmann-like Domain"/>
    <property type="match status" value="1"/>
</dbReference>
<dbReference type="HAMAP" id="MF_01576">
    <property type="entry name" value="THF_DHG_CYH"/>
    <property type="match status" value="1"/>
</dbReference>
<dbReference type="InterPro" id="IPR046346">
    <property type="entry name" value="Aminoacid_DH-like_N_sf"/>
</dbReference>
<dbReference type="InterPro" id="IPR036291">
    <property type="entry name" value="NAD(P)-bd_dom_sf"/>
</dbReference>
<dbReference type="InterPro" id="IPR000672">
    <property type="entry name" value="THF_DH/CycHdrlase"/>
</dbReference>
<dbReference type="InterPro" id="IPR020630">
    <property type="entry name" value="THF_DH/CycHdrlase_cat_dom"/>
</dbReference>
<dbReference type="InterPro" id="IPR020631">
    <property type="entry name" value="THF_DH/CycHdrlase_NAD-bd_dom"/>
</dbReference>
<dbReference type="PANTHER" id="PTHR48099:SF5">
    <property type="entry name" value="C-1-TETRAHYDROFOLATE SYNTHASE, CYTOPLASMIC"/>
    <property type="match status" value="1"/>
</dbReference>
<dbReference type="PANTHER" id="PTHR48099">
    <property type="entry name" value="C-1-TETRAHYDROFOLATE SYNTHASE, CYTOPLASMIC-RELATED"/>
    <property type="match status" value="1"/>
</dbReference>
<dbReference type="Pfam" id="PF00763">
    <property type="entry name" value="THF_DHG_CYH"/>
    <property type="match status" value="1"/>
</dbReference>
<dbReference type="Pfam" id="PF02882">
    <property type="entry name" value="THF_DHG_CYH_C"/>
    <property type="match status" value="1"/>
</dbReference>
<dbReference type="PRINTS" id="PR00085">
    <property type="entry name" value="THFDHDRGNASE"/>
</dbReference>
<dbReference type="SUPFAM" id="SSF53223">
    <property type="entry name" value="Aminoacid dehydrogenase-like, N-terminal domain"/>
    <property type="match status" value="1"/>
</dbReference>
<dbReference type="SUPFAM" id="SSF51735">
    <property type="entry name" value="NAD(P)-binding Rossmann-fold domains"/>
    <property type="match status" value="1"/>
</dbReference>
<proteinExistence type="inferred from homology"/>
<feature type="chain" id="PRO_0000268251" description="Bifunctional protein FolD">
    <location>
        <begin position="1"/>
        <end position="307"/>
    </location>
</feature>
<feature type="binding site" evidence="1">
    <location>
        <begin position="165"/>
        <end position="167"/>
    </location>
    <ligand>
        <name>NADP(+)</name>
        <dbReference type="ChEBI" id="CHEBI:58349"/>
    </ligand>
</feature>
<feature type="binding site" evidence="1">
    <location>
        <position position="190"/>
    </location>
    <ligand>
        <name>NADP(+)</name>
        <dbReference type="ChEBI" id="CHEBI:58349"/>
    </ligand>
</feature>
<feature type="binding site" evidence="1">
    <location>
        <position position="231"/>
    </location>
    <ligand>
        <name>NADP(+)</name>
        <dbReference type="ChEBI" id="CHEBI:58349"/>
    </ligand>
</feature>
<keyword id="KW-0028">Amino-acid biosynthesis</keyword>
<keyword id="KW-0368">Histidine biosynthesis</keyword>
<keyword id="KW-0378">Hydrolase</keyword>
<keyword id="KW-0486">Methionine biosynthesis</keyword>
<keyword id="KW-0511">Multifunctional enzyme</keyword>
<keyword id="KW-0521">NADP</keyword>
<keyword id="KW-0554">One-carbon metabolism</keyword>
<keyword id="KW-0560">Oxidoreductase</keyword>
<keyword id="KW-0658">Purine biosynthesis</keyword>
<keyword id="KW-1185">Reference proteome</keyword>
<evidence type="ECO:0000255" key="1">
    <source>
        <dbReference type="HAMAP-Rule" id="MF_01576"/>
    </source>
</evidence>
<accession>Q1II76</accession>
<organism>
    <name type="scientific">Koribacter versatilis (strain Ellin345)</name>
    <dbReference type="NCBI Taxonomy" id="204669"/>
    <lineage>
        <taxon>Bacteria</taxon>
        <taxon>Pseudomonadati</taxon>
        <taxon>Acidobacteriota</taxon>
        <taxon>Terriglobia</taxon>
        <taxon>Terriglobales</taxon>
        <taxon>Candidatus Korobacteraceae</taxon>
        <taxon>Candidatus Korobacter</taxon>
    </lineage>
</organism>
<reference key="1">
    <citation type="journal article" date="2009" name="Appl. Environ. Microbiol.">
        <title>Three genomes from the phylum Acidobacteria provide insight into the lifestyles of these microorganisms in soils.</title>
        <authorList>
            <person name="Ward N.L."/>
            <person name="Challacombe J.F."/>
            <person name="Janssen P.H."/>
            <person name="Henrissat B."/>
            <person name="Coutinho P.M."/>
            <person name="Wu M."/>
            <person name="Xie G."/>
            <person name="Haft D.H."/>
            <person name="Sait M."/>
            <person name="Badger J."/>
            <person name="Barabote R.D."/>
            <person name="Bradley B."/>
            <person name="Brettin T.S."/>
            <person name="Brinkac L.M."/>
            <person name="Bruce D."/>
            <person name="Creasy T."/>
            <person name="Daugherty S.C."/>
            <person name="Davidsen T.M."/>
            <person name="DeBoy R.T."/>
            <person name="Detter J.C."/>
            <person name="Dodson R.J."/>
            <person name="Durkin A.S."/>
            <person name="Ganapathy A."/>
            <person name="Gwinn-Giglio M."/>
            <person name="Han C.S."/>
            <person name="Khouri H."/>
            <person name="Kiss H."/>
            <person name="Kothari S.P."/>
            <person name="Madupu R."/>
            <person name="Nelson K.E."/>
            <person name="Nelson W.C."/>
            <person name="Paulsen I."/>
            <person name="Penn K."/>
            <person name="Ren Q."/>
            <person name="Rosovitz M.J."/>
            <person name="Selengut J.D."/>
            <person name="Shrivastava S."/>
            <person name="Sullivan S.A."/>
            <person name="Tapia R."/>
            <person name="Thompson L.S."/>
            <person name="Watkins K.L."/>
            <person name="Yang Q."/>
            <person name="Yu C."/>
            <person name="Zafar N."/>
            <person name="Zhou L."/>
            <person name="Kuske C.R."/>
        </authorList>
    </citation>
    <scope>NUCLEOTIDE SEQUENCE [LARGE SCALE GENOMIC DNA]</scope>
    <source>
        <strain>Ellin345</strain>
    </source>
</reference>
<name>FOLD_KORVE</name>
<sequence>MLATILDGNKISAEIKTEVAAEVAELKAKGLTPGLAVVLVGHNPASEIYVRNKVKACEMTGIYSEQHTPPDTVSTADLLQLVESLNRRNDIDGILVQLPLPKQVDSKKILLAVSPEKDVDGFHPMNVGYLSTVRPGLVPCTPAGCMEILRRSNVPVEGADAVVVGRSDIVGKPIAMLLTNANATVTICHSKTHDLPAVCRRADILVAAIGRPGMITPDFVKPGATVLDVGINKITDRAEFEKFFAGDAKREAAFAKNGSTLVGDCHPKVAEVAGAFTPVPGGVGPLTIAMLMANTVKAAKLRRGNTV</sequence>